<feature type="chain" id="PRO_0000353048" description="Transcriptional regulatory protein WalR">
    <location>
        <begin position="1"/>
        <end position="233"/>
    </location>
</feature>
<feature type="domain" description="Response regulatory" evidence="2">
    <location>
        <begin position="4"/>
        <end position="117"/>
    </location>
</feature>
<feature type="DNA-binding region" description="OmpR/PhoB-type" evidence="3">
    <location>
        <begin position="132"/>
        <end position="231"/>
    </location>
</feature>
<feature type="modified residue" description="4-aspartylphosphate" evidence="2">
    <location>
        <position position="53"/>
    </location>
</feature>
<keyword id="KW-0010">Activator</keyword>
<keyword id="KW-0963">Cytoplasm</keyword>
<keyword id="KW-0238">DNA-binding</keyword>
<keyword id="KW-0597">Phosphoprotein</keyword>
<keyword id="KW-0804">Transcription</keyword>
<keyword id="KW-0805">Transcription regulation</keyword>
<keyword id="KW-0902">Two-component regulatory system</keyword>
<organism>
    <name type="scientific">Staphylococcus haemolyticus (strain JCSC1435)</name>
    <dbReference type="NCBI Taxonomy" id="279808"/>
    <lineage>
        <taxon>Bacteria</taxon>
        <taxon>Bacillati</taxon>
        <taxon>Bacillota</taxon>
        <taxon>Bacilli</taxon>
        <taxon>Bacillales</taxon>
        <taxon>Staphylococcaceae</taxon>
        <taxon>Staphylococcus</taxon>
    </lineage>
</organism>
<reference key="1">
    <citation type="journal article" date="2005" name="J. Bacteriol.">
        <title>Whole-genome sequencing of Staphylococcus haemolyticus uncovers the extreme plasticity of its genome and the evolution of human-colonizing staphylococcal species.</title>
        <authorList>
            <person name="Takeuchi F."/>
            <person name="Watanabe S."/>
            <person name="Baba T."/>
            <person name="Yuzawa H."/>
            <person name="Ito T."/>
            <person name="Morimoto Y."/>
            <person name="Kuroda M."/>
            <person name="Cui L."/>
            <person name="Takahashi M."/>
            <person name="Ankai A."/>
            <person name="Baba S."/>
            <person name="Fukui S."/>
            <person name="Lee J.C."/>
            <person name="Hiramatsu K."/>
        </authorList>
    </citation>
    <scope>NUCLEOTIDE SEQUENCE [LARGE SCALE GENOMIC DNA]</scope>
    <source>
        <strain>JCSC1435</strain>
    </source>
</reference>
<gene>
    <name type="primary">walR</name>
    <name type="synonym">vicR</name>
    <name type="ordered locus">SH0017</name>
</gene>
<comment type="function">
    <text evidence="1">Member of the two-component regulatory system WalK/WalR.</text>
</comment>
<comment type="subcellular location">
    <subcellularLocation>
        <location evidence="4">Cytoplasm</location>
    </subcellularLocation>
</comment>
<comment type="PTM">
    <text evidence="1">Phosphorylated by WalK.</text>
</comment>
<dbReference type="EMBL" id="AP006716">
    <property type="protein sequence ID" value="BAE03326.1"/>
    <property type="molecule type" value="Genomic_DNA"/>
</dbReference>
<dbReference type="SMR" id="Q4LAJ9"/>
<dbReference type="KEGG" id="sha:SH0017"/>
<dbReference type="eggNOG" id="COG0745">
    <property type="taxonomic scope" value="Bacteria"/>
</dbReference>
<dbReference type="HOGENOM" id="CLU_000445_30_4_9"/>
<dbReference type="OrthoDB" id="9790442at2"/>
<dbReference type="Proteomes" id="UP000000543">
    <property type="component" value="Chromosome"/>
</dbReference>
<dbReference type="GO" id="GO:0005829">
    <property type="term" value="C:cytosol"/>
    <property type="evidence" value="ECO:0007669"/>
    <property type="project" value="TreeGrafter"/>
</dbReference>
<dbReference type="GO" id="GO:0032993">
    <property type="term" value="C:protein-DNA complex"/>
    <property type="evidence" value="ECO:0007669"/>
    <property type="project" value="TreeGrafter"/>
</dbReference>
<dbReference type="GO" id="GO:0000156">
    <property type="term" value="F:phosphorelay response regulator activity"/>
    <property type="evidence" value="ECO:0007669"/>
    <property type="project" value="TreeGrafter"/>
</dbReference>
<dbReference type="GO" id="GO:0000976">
    <property type="term" value="F:transcription cis-regulatory region binding"/>
    <property type="evidence" value="ECO:0007669"/>
    <property type="project" value="TreeGrafter"/>
</dbReference>
<dbReference type="GO" id="GO:0006355">
    <property type="term" value="P:regulation of DNA-templated transcription"/>
    <property type="evidence" value="ECO:0007669"/>
    <property type="project" value="InterPro"/>
</dbReference>
<dbReference type="CDD" id="cd17614">
    <property type="entry name" value="REC_OmpR_YycF-like"/>
    <property type="match status" value="1"/>
</dbReference>
<dbReference type="CDD" id="cd00383">
    <property type="entry name" value="trans_reg_C"/>
    <property type="match status" value="1"/>
</dbReference>
<dbReference type="FunFam" id="1.10.10.10:FF:000089">
    <property type="entry name" value="Alkaline phosphatase synthesis response regulator"/>
    <property type="match status" value="1"/>
</dbReference>
<dbReference type="FunFam" id="3.40.50.2300:FF:000052">
    <property type="entry name" value="DNA-binding response regulator YycF"/>
    <property type="match status" value="1"/>
</dbReference>
<dbReference type="Gene3D" id="3.40.50.2300">
    <property type="match status" value="1"/>
</dbReference>
<dbReference type="Gene3D" id="6.10.250.690">
    <property type="match status" value="1"/>
</dbReference>
<dbReference type="Gene3D" id="1.10.10.10">
    <property type="entry name" value="Winged helix-like DNA-binding domain superfamily/Winged helix DNA-binding domain"/>
    <property type="match status" value="1"/>
</dbReference>
<dbReference type="InterPro" id="IPR011006">
    <property type="entry name" value="CheY-like_superfamily"/>
</dbReference>
<dbReference type="InterPro" id="IPR001867">
    <property type="entry name" value="OmpR/PhoB-type_DNA-bd"/>
</dbReference>
<dbReference type="InterPro" id="IPR047791">
    <property type="entry name" value="Resp_reg_WalR"/>
</dbReference>
<dbReference type="InterPro" id="IPR016032">
    <property type="entry name" value="Sig_transdc_resp-reg_C-effctor"/>
</dbReference>
<dbReference type="InterPro" id="IPR001789">
    <property type="entry name" value="Sig_transdc_resp-reg_receiver"/>
</dbReference>
<dbReference type="InterPro" id="IPR039420">
    <property type="entry name" value="WalR-like"/>
</dbReference>
<dbReference type="InterPro" id="IPR036388">
    <property type="entry name" value="WH-like_DNA-bd_sf"/>
</dbReference>
<dbReference type="NCBIfam" id="NF040534">
    <property type="entry name" value="resp_reg_YycF"/>
    <property type="match status" value="1"/>
</dbReference>
<dbReference type="PANTHER" id="PTHR48111:SF40">
    <property type="entry name" value="PHOSPHATE REGULON TRANSCRIPTIONAL REGULATORY PROTEIN PHOB"/>
    <property type="match status" value="1"/>
</dbReference>
<dbReference type="PANTHER" id="PTHR48111">
    <property type="entry name" value="REGULATOR OF RPOS"/>
    <property type="match status" value="1"/>
</dbReference>
<dbReference type="Pfam" id="PF00072">
    <property type="entry name" value="Response_reg"/>
    <property type="match status" value="1"/>
</dbReference>
<dbReference type="Pfam" id="PF00486">
    <property type="entry name" value="Trans_reg_C"/>
    <property type="match status" value="1"/>
</dbReference>
<dbReference type="SMART" id="SM00448">
    <property type="entry name" value="REC"/>
    <property type="match status" value="1"/>
</dbReference>
<dbReference type="SMART" id="SM00862">
    <property type="entry name" value="Trans_reg_C"/>
    <property type="match status" value="1"/>
</dbReference>
<dbReference type="SUPFAM" id="SSF46894">
    <property type="entry name" value="C-terminal effector domain of the bipartite response regulators"/>
    <property type="match status" value="1"/>
</dbReference>
<dbReference type="SUPFAM" id="SSF52172">
    <property type="entry name" value="CheY-like"/>
    <property type="match status" value="1"/>
</dbReference>
<dbReference type="PROSITE" id="PS51755">
    <property type="entry name" value="OMPR_PHOB"/>
    <property type="match status" value="1"/>
</dbReference>
<dbReference type="PROSITE" id="PS50110">
    <property type="entry name" value="RESPONSE_REGULATORY"/>
    <property type="match status" value="1"/>
</dbReference>
<evidence type="ECO:0000250" key="1">
    <source>
        <dbReference type="UniProtKB" id="Q2G2U6"/>
    </source>
</evidence>
<evidence type="ECO:0000255" key="2">
    <source>
        <dbReference type="PROSITE-ProRule" id="PRU00169"/>
    </source>
</evidence>
<evidence type="ECO:0000255" key="3">
    <source>
        <dbReference type="PROSITE-ProRule" id="PRU01091"/>
    </source>
</evidence>
<evidence type="ECO:0000305" key="4"/>
<protein>
    <recommendedName>
        <fullName evidence="4">Transcriptional regulatory protein WalR</fullName>
    </recommendedName>
</protein>
<proteinExistence type="inferred from homology"/>
<name>WALR_STAHJ</name>
<accession>Q4LAJ9</accession>
<sequence length="233" mass="27149">MARKVVVVDDEKPIADILEFNLKKEGYDVYCAYDGNDAVDLIYEEEPDIVLLDIMLPGRDGMEVCREVRKKFEMPIIMLTAKDSEIDKVLGLELGADDYVTKPFSTRELIARVKANLRRHYSQPAQEVSGTTNEITIKDIVIYPDAYSIKKRGEDIELTHREFELFHYLSKHMGQVMTREHLLQTVWGYDYFGDVRTVDVTIRRLREKIEDDPSHPEYIVTRRGVGYFLQQHD</sequence>